<reference key="1">
    <citation type="submission" date="2006-06" db="EMBL/GenBank/DDBJ databases">
        <title>Complete sequence of Rubrobacter xylanophilus DSM 9941.</title>
        <authorList>
            <consortium name="US DOE Joint Genome Institute"/>
            <person name="Copeland A."/>
            <person name="Lucas S."/>
            <person name="Lapidus A."/>
            <person name="Barry K."/>
            <person name="Detter J.C."/>
            <person name="Glavina del Rio T."/>
            <person name="Hammon N."/>
            <person name="Israni S."/>
            <person name="Dalin E."/>
            <person name="Tice H."/>
            <person name="Pitluck S."/>
            <person name="Munk A.C."/>
            <person name="Brettin T."/>
            <person name="Bruce D."/>
            <person name="Han C."/>
            <person name="Tapia R."/>
            <person name="Gilna P."/>
            <person name="Schmutz J."/>
            <person name="Larimer F."/>
            <person name="Land M."/>
            <person name="Hauser L."/>
            <person name="Kyrpides N."/>
            <person name="Lykidis A."/>
            <person name="da Costa M.S."/>
            <person name="Rainey F.A."/>
            <person name="Empadinhas N."/>
            <person name="Jolivet E."/>
            <person name="Battista J.R."/>
            <person name="Richardson P."/>
        </authorList>
    </citation>
    <scope>NUCLEOTIDE SEQUENCE [LARGE SCALE GENOMIC DNA]</scope>
    <source>
        <strain>DSM 9941 / JCM 11954 / NBRC 16129 / PRD-1</strain>
    </source>
</reference>
<comment type="similarity">
    <text evidence="1">Belongs to the bacterial ribosomal protein bL34 family.</text>
</comment>
<feature type="chain" id="PRO_1000013434" description="Large ribosomal subunit protein bL34">
    <location>
        <begin position="1"/>
        <end position="44"/>
    </location>
</feature>
<feature type="region of interest" description="Disordered" evidence="2">
    <location>
        <begin position="1"/>
        <end position="24"/>
    </location>
</feature>
<feature type="compositionally biased region" description="Basic residues" evidence="2">
    <location>
        <begin position="1"/>
        <end position="22"/>
    </location>
</feature>
<evidence type="ECO:0000255" key="1">
    <source>
        <dbReference type="HAMAP-Rule" id="MF_00391"/>
    </source>
</evidence>
<evidence type="ECO:0000256" key="2">
    <source>
        <dbReference type="SAM" id="MobiDB-lite"/>
    </source>
</evidence>
<evidence type="ECO:0000305" key="3"/>
<protein>
    <recommendedName>
        <fullName evidence="1">Large ribosomal subunit protein bL34</fullName>
    </recommendedName>
    <alternativeName>
        <fullName evidence="3">50S ribosomal protein L34</fullName>
    </alternativeName>
</protein>
<dbReference type="EMBL" id="CP000386">
    <property type="protein sequence ID" value="ABG06120.1"/>
    <property type="molecule type" value="Genomic_DNA"/>
</dbReference>
<dbReference type="RefSeq" id="WP_011566125.1">
    <property type="nucleotide sequence ID" value="NC_008148.1"/>
</dbReference>
<dbReference type="SMR" id="Q1AR58"/>
<dbReference type="STRING" id="266117.Rxyl_3216"/>
<dbReference type="KEGG" id="rxy:Rxyl_3216"/>
<dbReference type="eggNOG" id="COG0230">
    <property type="taxonomic scope" value="Bacteria"/>
</dbReference>
<dbReference type="HOGENOM" id="CLU_129938_2_0_11"/>
<dbReference type="PhylomeDB" id="Q1AR58"/>
<dbReference type="Proteomes" id="UP000006637">
    <property type="component" value="Chromosome"/>
</dbReference>
<dbReference type="GO" id="GO:1990904">
    <property type="term" value="C:ribonucleoprotein complex"/>
    <property type="evidence" value="ECO:0007669"/>
    <property type="project" value="UniProtKB-KW"/>
</dbReference>
<dbReference type="GO" id="GO:0005840">
    <property type="term" value="C:ribosome"/>
    <property type="evidence" value="ECO:0007669"/>
    <property type="project" value="UniProtKB-KW"/>
</dbReference>
<dbReference type="GO" id="GO:0003735">
    <property type="term" value="F:structural constituent of ribosome"/>
    <property type="evidence" value="ECO:0007669"/>
    <property type="project" value="InterPro"/>
</dbReference>
<dbReference type="GO" id="GO:0006412">
    <property type="term" value="P:translation"/>
    <property type="evidence" value="ECO:0007669"/>
    <property type="project" value="UniProtKB-UniRule"/>
</dbReference>
<dbReference type="FunFam" id="1.10.287.3980:FF:000001">
    <property type="entry name" value="Mitochondrial ribosomal protein L34"/>
    <property type="match status" value="1"/>
</dbReference>
<dbReference type="Gene3D" id="1.10.287.3980">
    <property type="match status" value="1"/>
</dbReference>
<dbReference type="HAMAP" id="MF_00391">
    <property type="entry name" value="Ribosomal_bL34"/>
    <property type="match status" value="1"/>
</dbReference>
<dbReference type="InterPro" id="IPR000271">
    <property type="entry name" value="Ribosomal_bL34"/>
</dbReference>
<dbReference type="InterPro" id="IPR020939">
    <property type="entry name" value="Ribosomal_bL34_CS"/>
</dbReference>
<dbReference type="NCBIfam" id="TIGR01030">
    <property type="entry name" value="rpmH_bact"/>
    <property type="match status" value="1"/>
</dbReference>
<dbReference type="PANTHER" id="PTHR14503:SF4">
    <property type="entry name" value="LARGE RIBOSOMAL SUBUNIT PROTEIN BL34M"/>
    <property type="match status" value="1"/>
</dbReference>
<dbReference type="PANTHER" id="PTHR14503">
    <property type="entry name" value="MITOCHONDRIAL RIBOSOMAL PROTEIN 34 FAMILY MEMBER"/>
    <property type="match status" value="1"/>
</dbReference>
<dbReference type="Pfam" id="PF00468">
    <property type="entry name" value="Ribosomal_L34"/>
    <property type="match status" value="1"/>
</dbReference>
<dbReference type="PROSITE" id="PS00784">
    <property type="entry name" value="RIBOSOMAL_L34"/>
    <property type="match status" value="1"/>
</dbReference>
<sequence>MKRTYQPNRRKRAKTHGFRKRMSSVGGRRIIAARRRRGRKRLAV</sequence>
<keyword id="KW-1185">Reference proteome</keyword>
<keyword id="KW-0687">Ribonucleoprotein</keyword>
<keyword id="KW-0689">Ribosomal protein</keyword>
<proteinExistence type="inferred from homology"/>
<name>RL34_RUBXD</name>
<gene>
    <name evidence="1" type="primary">rpmH</name>
    <name type="ordered locus">Rxyl_3216</name>
</gene>
<accession>Q1AR58</accession>
<organism>
    <name type="scientific">Rubrobacter xylanophilus (strain DSM 9941 / JCM 11954 / NBRC 16129 / PRD-1)</name>
    <dbReference type="NCBI Taxonomy" id="266117"/>
    <lineage>
        <taxon>Bacteria</taxon>
        <taxon>Bacillati</taxon>
        <taxon>Actinomycetota</taxon>
        <taxon>Rubrobacteria</taxon>
        <taxon>Rubrobacterales</taxon>
        <taxon>Rubrobacteraceae</taxon>
        <taxon>Rubrobacter</taxon>
    </lineage>
</organism>